<reference key="1">
    <citation type="journal article" date="2008" name="Immunogenetics">
        <title>Natural selection in the TLR-related genes in the course of primate evolution.</title>
        <authorList>
            <person name="Nakajima T."/>
            <person name="Ohtani H."/>
            <person name="Satta Y."/>
            <person name="Uno Y."/>
            <person name="Akari H."/>
            <person name="Ishida T."/>
            <person name="Kimura A."/>
        </authorList>
    </citation>
    <scope>NUCLEOTIDE SEQUENCE [MRNA]</scope>
</reference>
<evidence type="ECO:0000250" key="1"/>
<evidence type="ECO:0000250" key="2">
    <source>
        <dbReference type="UniProtKB" id="P22366"/>
    </source>
</evidence>
<evidence type="ECO:0000250" key="3">
    <source>
        <dbReference type="UniProtKB" id="Q99836"/>
    </source>
</evidence>
<evidence type="ECO:0000255" key="4">
    <source>
        <dbReference type="PROSITE-ProRule" id="PRU00064"/>
    </source>
</evidence>
<evidence type="ECO:0000255" key="5">
    <source>
        <dbReference type="PROSITE-ProRule" id="PRU00204"/>
    </source>
</evidence>
<comment type="function">
    <text evidence="2 3">Adapter protein involved in the Toll-like receptor and IL-1 receptor signaling pathway in the innate immune response. Acts via IRAK1, IRAK2, IRF7 and TRAF6, leading to NF-kappa-B activation, cytokine secretion and the inflammatory response. Increases IL-8 transcription. Involved in IL-18-mediated signaling pathway. Activates IRF1 resulting in its rapid migration into the nucleus to mediate an efficient induction of IFN-beta, NOS2/INOS, and IL12A genes. Upon TLR8 activation by GU-rich single-stranded RNA (GU-rich RNA) derived from viruses, induces IL1B release through NLRP3 inflammasome activation (By similarity). MyD88-mediated signaling in intestinal epithelial cells is crucial for maintenance of gut homeostasis and controls the expression of the antimicrobial lectin REG3G in the small intestine (By similarity).</text>
</comment>
<comment type="subunit">
    <text evidence="3">Homodimer. Also forms heterodimers with TIRAP. Binds to TLR2, TLR4, IRAK1, IRAK2 and IRAK4 via their respective TIR domains. Interacts with IL18R1. Interacts with BMX, IL1RL1, IKBKE and IRF7. Interacts with LRRFIP1 and LRRFIP2; this interaction positively regulates Toll-like receptor (TLR) signaling in response to agonist. Interacts with FLII. LRRFIP1 and LRRFIP2 compete with FLII for MYD88-binding. Interacts with IRF1. Upon IL1B treatment, forms a complex with PELI1, IRAK1, IRAK4 and TRAF6; this complex recruits MAP3K7/TAK1, TAB1 and TAB2 to mediate NF-kappa-B activation. Direct binding of SMAD6 to PELI1 prevents the complex formation and hence negatively regulates IL1R-TLR signaling and eventually NF-kappa-B-mediated gene expression. May interact with PIK3AP1. Interacts (via TIR domain) with DHX9 (via H2A and OB-fold regions); this interaction is direct. Interacts with OTUD4 deubiquitinase; the interaction is direct.</text>
</comment>
<comment type="subcellular location">
    <subcellularLocation>
        <location evidence="3">Cytoplasm</location>
    </subcellularLocation>
    <subcellularLocation>
        <location evidence="3">Nucleus</location>
    </subcellularLocation>
</comment>
<comment type="domain">
    <text evidence="2">The intermediate domain (ID) is required for the phosphorylation and activation of IRAK.</text>
</comment>
<comment type="PTM">
    <text evidence="3">Ubiquitinated; undergoes 'Lys-63'-linked polyubiquitination. OTUD4 specifically hydrolyzes 'Lys-63'-linked polyubiquitinated MYD88. Deubiquitinated by USP3 that cleaves 'Lys-63'-linked ubiquitin chains leading to inhibition of MYD88-induced NF-kappa-B signaling.</text>
</comment>
<proteinExistence type="evidence at transcript level"/>
<feature type="chain" id="PRO_0000393132" description="Myeloid differentiation primary response protein MyD88">
    <location>
        <begin position="1"/>
        <end position="296"/>
    </location>
</feature>
<feature type="domain" description="Death" evidence="4">
    <location>
        <begin position="32"/>
        <end position="109"/>
    </location>
</feature>
<feature type="domain" description="TIR" evidence="5">
    <location>
        <begin position="159"/>
        <end position="293"/>
    </location>
</feature>
<feature type="region of interest" description="Intermediate domain" evidence="1">
    <location>
        <begin position="110"/>
        <end position="155"/>
    </location>
</feature>
<feature type="modified residue" description="Phosphoserine" evidence="3">
    <location>
        <position position="244"/>
    </location>
</feature>
<keyword id="KW-0963">Cytoplasm</keyword>
<keyword id="KW-0391">Immunity</keyword>
<keyword id="KW-0395">Inflammatory response</keyword>
<keyword id="KW-0399">Innate immunity</keyword>
<keyword id="KW-0539">Nucleus</keyword>
<keyword id="KW-0597">Phosphoprotein</keyword>
<keyword id="KW-1185">Reference proteome</keyword>
<keyword id="KW-0832">Ubl conjugation</keyword>
<sequence length="296" mass="33354">MAAGGPGTEPAAPVSSTSSLPLAALNMRVRRRLSLFLNVRTQVAADWTALAEEMDFEYLEIRQLETHADPTGRLLDAWQGRPGASVGRLLELLTKLGRDDVLLELGPSIEEDCQKYILKQQQEEAEKPLQVAAVDSSVPRTAELAGITTLDDPLGHMPERFDAFICYCPSDIQFVQEMIRQLEQTNYRLKLCVSDRDVLPGTCVWSIASELIEKRCRRMVVVVSDDYLQSKECDFQTKFALSLSPGAHQKRLIPIKYKAMKKEFPSILRFITVCDYTNPCTKSWFWTRLAKALSLP</sequence>
<organism>
    <name type="scientific">Macaca fascicularis</name>
    <name type="common">Crab-eating macaque</name>
    <name type="synonym">Cynomolgus monkey</name>
    <dbReference type="NCBI Taxonomy" id="9541"/>
    <lineage>
        <taxon>Eukaryota</taxon>
        <taxon>Metazoa</taxon>
        <taxon>Chordata</taxon>
        <taxon>Craniata</taxon>
        <taxon>Vertebrata</taxon>
        <taxon>Euteleostomi</taxon>
        <taxon>Mammalia</taxon>
        <taxon>Eutheria</taxon>
        <taxon>Euarchontoglires</taxon>
        <taxon>Primates</taxon>
        <taxon>Haplorrhini</taxon>
        <taxon>Catarrhini</taxon>
        <taxon>Cercopithecidae</taxon>
        <taxon>Cercopithecinae</taxon>
        <taxon>Macaca</taxon>
    </lineage>
</organism>
<name>MYD88_MACFA</name>
<dbReference type="EMBL" id="AB446475">
    <property type="protein sequence ID" value="BAG55252.1"/>
    <property type="molecule type" value="mRNA"/>
</dbReference>
<dbReference type="BMRB" id="B3Y682"/>
<dbReference type="SMR" id="B3Y682"/>
<dbReference type="STRING" id="9541.ENSMFAP00000028875"/>
<dbReference type="eggNOG" id="ENOG502QWKI">
    <property type="taxonomic scope" value="Eukaryota"/>
</dbReference>
<dbReference type="Proteomes" id="UP000233100">
    <property type="component" value="Unplaced"/>
</dbReference>
<dbReference type="GO" id="GO:0005737">
    <property type="term" value="C:cytoplasm"/>
    <property type="evidence" value="ECO:0007669"/>
    <property type="project" value="UniProtKB-SubCell"/>
</dbReference>
<dbReference type="GO" id="GO:0005634">
    <property type="term" value="C:nucleus"/>
    <property type="evidence" value="ECO:0007669"/>
    <property type="project" value="UniProtKB-SubCell"/>
</dbReference>
<dbReference type="GO" id="GO:0005886">
    <property type="term" value="C:plasma membrane"/>
    <property type="evidence" value="ECO:0007669"/>
    <property type="project" value="TreeGrafter"/>
</dbReference>
<dbReference type="GO" id="GO:0070976">
    <property type="term" value="F:TIR domain binding"/>
    <property type="evidence" value="ECO:0007669"/>
    <property type="project" value="InterPro"/>
</dbReference>
<dbReference type="GO" id="GO:0035325">
    <property type="term" value="F:Toll-like receptor binding"/>
    <property type="evidence" value="ECO:0007669"/>
    <property type="project" value="TreeGrafter"/>
</dbReference>
<dbReference type="GO" id="GO:0050830">
    <property type="term" value="P:defense response to Gram-positive bacterium"/>
    <property type="evidence" value="ECO:0000250"/>
    <property type="project" value="UniProtKB"/>
</dbReference>
<dbReference type="GO" id="GO:0051607">
    <property type="term" value="P:defense response to virus"/>
    <property type="evidence" value="ECO:0000250"/>
    <property type="project" value="UniProtKB"/>
</dbReference>
<dbReference type="GO" id="GO:0006954">
    <property type="term" value="P:inflammatory response"/>
    <property type="evidence" value="ECO:0007669"/>
    <property type="project" value="UniProtKB-KW"/>
</dbReference>
<dbReference type="GO" id="GO:0045087">
    <property type="term" value="P:innate immune response"/>
    <property type="evidence" value="ECO:0007669"/>
    <property type="project" value="UniProtKB-KW"/>
</dbReference>
<dbReference type="GO" id="GO:0002755">
    <property type="term" value="P:MyD88-dependent toll-like receptor signaling pathway"/>
    <property type="evidence" value="ECO:0007669"/>
    <property type="project" value="InterPro"/>
</dbReference>
<dbReference type="GO" id="GO:0043123">
    <property type="term" value="P:positive regulation of canonical NF-kappaB signal transduction"/>
    <property type="evidence" value="ECO:0007669"/>
    <property type="project" value="InterPro"/>
</dbReference>
<dbReference type="GO" id="GO:0032731">
    <property type="term" value="P:positive regulation of interleukin-1 beta production"/>
    <property type="evidence" value="ECO:0000250"/>
    <property type="project" value="UniProtKB"/>
</dbReference>
<dbReference type="GO" id="GO:1900227">
    <property type="term" value="P:positive regulation of NLRP3 inflammasome complex assembly"/>
    <property type="evidence" value="ECO:0000250"/>
    <property type="project" value="UniProtKB"/>
</dbReference>
<dbReference type="GO" id="GO:0008063">
    <property type="term" value="P:Toll signaling pathway"/>
    <property type="evidence" value="ECO:0007669"/>
    <property type="project" value="TreeGrafter"/>
</dbReference>
<dbReference type="GO" id="GO:0034142">
    <property type="term" value="P:toll-like receptor 4 signaling pathway"/>
    <property type="evidence" value="ECO:0007669"/>
    <property type="project" value="TreeGrafter"/>
</dbReference>
<dbReference type="GO" id="GO:0034158">
    <property type="term" value="P:toll-like receptor 8 signaling pathway"/>
    <property type="evidence" value="ECO:0000250"/>
    <property type="project" value="UniProtKB"/>
</dbReference>
<dbReference type="CDD" id="cd08312">
    <property type="entry name" value="Death_MyD88"/>
    <property type="match status" value="1"/>
</dbReference>
<dbReference type="FunFam" id="1.10.533.10:FF:000029">
    <property type="entry name" value="Myeloid differentiation primary response protein MyD88"/>
    <property type="match status" value="1"/>
</dbReference>
<dbReference type="FunFam" id="3.40.50.10140:FF:000005">
    <property type="entry name" value="Myeloid differentiation primary response protein MyD88"/>
    <property type="match status" value="1"/>
</dbReference>
<dbReference type="Gene3D" id="1.10.533.10">
    <property type="entry name" value="Death Domain, Fas"/>
    <property type="match status" value="1"/>
</dbReference>
<dbReference type="Gene3D" id="3.40.50.10140">
    <property type="entry name" value="Toll/interleukin-1 receptor homology (TIR) domain"/>
    <property type="match status" value="1"/>
</dbReference>
<dbReference type="InterPro" id="IPR011029">
    <property type="entry name" value="DEATH-like_dom_sf"/>
</dbReference>
<dbReference type="InterPro" id="IPR000488">
    <property type="entry name" value="Death_dom"/>
</dbReference>
<dbReference type="InterPro" id="IPR034249">
    <property type="entry name" value="MyD88_Death"/>
</dbReference>
<dbReference type="InterPro" id="IPR017281">
    <property type="entry name" value="Myelin_different_resp_MyD88"/>
</dbReference>
<dbReference type="InterPro" id="IPR000157">
    <property type="entry name" value="TIR_dom"/>
</dbReference>
<dbReference type="InterPro" id="IPR035897">
    <property type="entry name" value="Toll_tir_struct_dom_sf"/>
</dbReference>
<dbReference type="PANTHER" id="PTHR15079">
    <property type="entry name" value="MYD88"/>
    <property type="match status" value="1"/>
</dbReference>
<dbReference type="PANTHER" id="PTHR15079:SF3">
    <property type="entry name" value="MYELOID DIFFERENTIATION PRIMARY RESPONSE PROTEIN MYD88"/>
    <property type="match status" value="1"/>
</dbReference>
<dbReference type="Pfam" id="PF00531">
    <property type="entry name" value="Death"/>
    <property type="match status" value="1"/>
</dbReference>
<dbReference type="Pfam" id="PF13676">
    <property type="entry name" value="TIR_2"/>
    <property type="match status" value="1"/>
</dbReference>
<dbReference type="PIRSF" id="PIRSF037756">
    <property type="entry name" value="MyD88"/>
    <property type="match status" value="1"/>
</dbReference>
<dbReference type="SMART" id="SM00005">
    <property type="entry name" value="DEATH"/>
    <property type="match status" value="1"/>
</dbReference>
<dbReference type="SMART" id="SM00255">
    <property type="entry name" value="TIR"/>
    <property type="match status" value="1"/>
</dbReference>
<dbReference type="SUPFAM" id="SSF47986">
    <property type="entry name" value="DEATH domain"/>
    <property type="match status" value="1"/>
</dbReference>
<dbReference type="SUPFAM" id="SSF52200">
    <property type="entry name" value="Toll/Interleukin receptor TIR domain"/>
    <property type="match status" value="1"/>
</dbReference>
<dbReference type="PROSITE" id="PS50017">
    <property type="entry name" value="DEATH_DOMAIN"/>
    <property type="match status" value="1"/>
</dbReference>
<dbReference type="PROSITE" id="PS50104">
    <property type="entry name" value="TIR"/>
    <property type="match status" value="1"/>
</dbReference>
<protein>
    <recommendedName>
        <fullName>Myeloid differentiation primary response protein MyD88</fullName>
    </recommendedName>
</protein>
<gene>
    <name type="primary">MYD88</name>
</gene>
<accession>B3Y682</accession>